<comment type="function">
    <text evidence="1">Catalyzes the ATP-dependent amination of UTP to CTP with either L-glutamine or ammonia as the source of nitrogen. Regulates intracellular CTP levels through interactions with the four ribonucleotide triphosphates.</text>
</comment>
<comment type="catalytic activity">
    <reaction evidence="1">
        <text>UTP + L-glutamine + ATP + H2O = CTP + L-glutamate + ADP + phosphate + 2 H(+)</text>
        <dbReference type="Rhea" id="RHEA:26426"/>
        <dbReference type="ChEBI" id="CHEBI:15377"/>
        <dbReference type="ChEBI" id="CHEBI:15378"/>
        <dbReference type="ChEBI" id="CHEBI:29985"/>
        <dbReference type="ChEBI" id="CHEBI:30616"/>
        <dbReference type="ChEBI" id="CHEBI:37563"/>
        <dbReference type="ChEBI" id="CHEBI:43474"/>
        <dbReference type="ChEBI" id="CHEBI:46398"/>
        <dbReference type="ChEBI" id="CHEBI:58359"/>
        <dbReference type="ChEBI" id="CHEBI:456216"/>
        <dbReference type="EC" id="6.3.4.2"/>
    </reaction>
</comment>
<comment type="catalytic activity">
    <reaction evidence="1">
        <text>L-glutamine + H2O = L-glutamate + NH4(+)</text>
        <dbReference type="Rhea" id="RHEA:15889"/>
        <dbReference type="ChEBI" id="CHEBI:15377"/>
        <dbReference type="ChEBI" id="CHEBI:28938"/>
        <dbReference type="ChEBI" id="CHEBI:29985"/>
        <dbReference type="ChEBI" id="CHEBI:58359"/>
    </reaction>
</comment>
<comment type="catalytic activity">
    <reaction evidence="1">
        <text>UTP + NH4(+) + ATP = CTP + ADP + phosphate + 2 H(+)</text>
        <dbReference type="Rhea" id="RHEA:16597"/>
        <dbReference type="ChEBI" id="CHEBI:15378"/>
        <dbReference type="ChEBI" id="CHEBI:28938"/>
        <dbReference type="ChEBI" id="CHEBI:30616"/>
        <dbReference type="ChEBI" id="CHEBI:37563"/>
        <dbReference type="ChEBI" id="CHEBI:43474"/>
        <dbReference type="ChEBI" id="CHEBI:46398"/>
        <dbReference type="ChEBI" id="CHEBI:456216"/>
    </reaction>
</comment>
<comment type="activity regulation">
    <text evidence="1">Allosterically activated by GTP, when glutamine is the substrate; GTP has no effect on the reaction when ammonia is the substrate. The allosteric effector GTP functions by stabilizing the protein conformation that binds the tetrahedral intermediate(s) formed during glutamine hydrolysis. Inhibited by the product CTP, via allosteric rather than competitive inhibition.</text>
</comment>
<comment type="pathway">
    <text evidence="1">Pyrimidine metabolism; CTP biosynthesis via de novo pathway; CTP from UDP: step 2/2.</text>
</comment>
<comment type="subunit">
    <text evidence="1">Homotetramer.</text>
</comment>
<comment type="miscellaneous">
    <text evidence="1">CTPSs have evolved a hybrid strategy for distinguishing between UTP and CTP. The overlapping regions of the product feedback inhibitory and substrate sites recognize a common feature in both compounds, the triphosphate moiety. To differentiate isosteric substrate and product pyrimidine rings, an additional pocket far from the expected kinase/ligase catalytic site, specifically recognizes the cytosine and ribose portions of the product inhibitor.</text>
</comment>
<comment type="similarity">
    <text evidence="1">Belongs to the CTP synthase family.</text>
</comment>
<evidence type="ECO:0000255" key="1">
    <source>
        <dbReference type="HAMAP-Rule" id="MF_01227"/>
    </source>
</evidence>
<evidence type="ECO:0000256" key="2">
    <source>
        <dbReference type="SAM" id="MobiDB-lite"/>
    </source>
</evidence>
<proteinExistence type="inferred from homology"/>
<organism>
    <name type="scientific">Acaryochloris marina (strain MBIC 11017)</name>
    <dbReference type="NCBI Taxonomy" id="329726"/>
    <lineage>
        <taxon>Bacteria</taxon>
        <taxon>Bacillati</taxon>
        <taxon>Cyanobacteriota</taxon>
        <taxon>Cyanophyceae</taxon>
        <taxon>Acaryochloridales</taxon>
        <taxon>Acaryochloridaceae</taxon>
        <taxon>Acaryochloris</taxon>
    </lineage>
</organism>
<dbReference type="EC" id="6.3.4.2" evidence="1"/>
<dbReference type="EMBL" id="CP000828">
    <property type="protein sequence ID" value="ABW27912.1"/>
    <property type="molecule type" value="Genomic_DNA"/>
</dbReference>
<dbReference type="RefSeq" id="WP_012163348.1">
    <property type="nucleotide sequence ID" value="NC_009925.1"/>
</dbReference>
<dbReference type="SMR" id="B0CBC7"/>
<dbReference type="STRING" id="329726.AM1_2914"/>
<dbReference type="MEROPS" id="C26.964"/>
<dbReference type="KEGG" id="amr:AM1_2914"/>
<dbReference type="eggNOG" id="COG0504">
    <property type="taxonomic scope" value="Bacteria"/>
</dbReference>
<dbReference type="HOGENOM" id="CLU_011675_5_0_3"/>
<dbReference type="OrthoDB" id="9801107at2"/>
<dbReference type="UniPathway" id="UPA00159">
    <property type="reaction ID" value="UER00277"/>
</dbReference>
<dbReference type="Proteomes" id="UP000000268">
    <property type="component" value="Chromosome"/>
</dbReference>
<dbReference type="GO" id="GO:0005829">
    <property type="term" value="C:cytosol"/>
    <property type="evidence" value="ECO:0007669"/>
    <property type="project" value="TreeGrafter"/>
</dbReference>
<dbReference type="GO" id="GO:0005524">
    <property type="term" value="F:ATP binding"/>
    <property type="evidence" value="ECO:0007669"/>
    <property type="project" value="UniProtKB-KW"/>
</dbReference>
<dbReference type="GO" id="GO:0003883">
    <property type="term" value="F:CTP synthase activity"/>
    <property type="evidence" value="ECO:0007669"/>
    <property type="project" value="UniProtKB-UniRule"/>
</dbReference>
<dbReference type="GO" id="GO:0004359">
    <property type="term" value="F:glutaminase activity"/>
    <property type="evidence" value="ECO:0007669"/>
    <property type="project" value="RHEA"/>
</dbReference>
<dbReference type="GO" id="GO:0042802">
    <property type="term" value="F:identical protein binding"/>
    <property type="evidence" value="ECO:0007669"/>
    <property type="project" value="TreeGrafter"/>
</dbReference>
<dbReference type="GO" id="GO:0046872">
    <property type="term" value="F:metal ion binding"/>
    <property type="evidence" value="ECO:0007669"/>
    <property type="project" value="UniProtKB-KW"/>
</dbReference>
<dbReference type="GO" id="GO:0044210">
    <property type="term" value="P:'de novo' CTP biosynthetic process"/>
    <property type="evidence" value="ECO:0007669"/>
    <property type="project" value="UniProtKB-UniRule"/>
</dbReference>
<dbReference type="GO" id="GO:0019856">
    <property type="term" value="P:pyrimidine nucleobase biosynthetic process"/>
    <property type="evidence" value="ECO:0007669"/>
    <property type="project" value="TreeGrafter"/>
</dbReference>
<dbReference type="CDD" id="cd03113">
    <property type="entry name" value="CTPS_N"/>
    <property type="match status" value="1"/>
</dbReference>
<dbReference type="CDD" id="cd01746">
    <property type="entry name" value="GATase1_CTP_Synthase"/>
    <property type="match status" value="1"/>
</dbReference>
<dbReference type="FunFam" id="3.40.50.300:FF:000009">
    <property type="entry name" value="CTP synthase"/>
    <property type="match status" value="1"/>
</dbReference>
<dbReference type="FunFam" id="3.40.50.880:FF:000002">
    <property type="entry name" value="CTP synthase"/>
    <property type="match status" value="1"/>
</dbReference>
<dbReference type="Gene3D" id="3.40.50.880">
    <property type="match status" value="1"/>
</dbReference>
<dbReference type="Gene3D" id="3.40.50.300">
    <property type="entry name" value="P-loop containing nucleotide triphosphate hydrolases"/>
    <property type="match status" value="1"/>
</dbReference>
<dbReference type="HAMAP" id="MF_01227">
    <property type="entry name" value="PyrG"/>
    <property type="match status" value="1"/>
</dbReference>
<dbReference type="InterPro" id="IPR029062">
    <property type="entry name" value="Class_I_gatase-like"/>
</dbReference>
<dbReference type="InterPro" id="IPR004468">
    <property type="entry name" value="CTP_synthase"/>
</dbReference>
<dbReference type="InterPro" id="IPR017456">
    <property type="entry name" value="CTP_synthase_N"/>
</dbReference>
<dbReference type="InterPro" id="IPR017926">
    <property type="entry name" value="GATASE"/>
</dbReference>
<dbReference type="InterPro" id="IPR033828">
    <property type="entry name" value="GATase1_CTP_Synthase"/>
</dbReference>
<dbReference type="InterPro" id="IPR027417">
    <property type="entry name" value="P-loop_NTPase"/>
</dbReference>
<dbReference type="NCBIfam" id="NF003792">
    <property type="entry name" value="PRK05380.1"/>
    <property type="match status" value="1"/>
</dbReference>
<dbReference type="NCBIfam" id="TIGR00337">
    <property type="entry name" value="PyrG"/>
    <property type="match status" value="1"/>
</dbReference>
<dbReference type="PANTHER" id="PTHR11550">
    <property type="entry name" value="CTP SYNTHASE"/>
    <property type="match status" value="1"/>
</dbReference>
<dbReference type="PANTHER" id="PTHR11550:SF0">
    <property type="entry name" value="CTP SYNTHASE-RELATED"/>
    <property type="match status" value="1"/>
</dbReference>
<dbReference type="Pfam" id="PF06418">
    <property type="entry name" value="CTP_synth_N"/>
    <property type="match status" value="1"/>
</dbReference>
<dbReference type="Pfam" id="PF00117">
    <property type="entry name" value="GATase"/>
    <property type="match status" value="1"/>
</dbReference>
<dbReference type="SUPFAM" id="SSF52317">
    <property type="entry name" value="Class I glutamine amidotransferase-like"/>
    <property type="match status" value="1"/>
</dbReference>
<dbReference type="SUPFAM" id="SSF52540">
    <property type="entry name" value="P-loop containing nucleoside triphosphate hydrolases"/>
    <property type="match status" value="1"/>
</dbReference>
<dbReference type="PROSITE" id="PS51273">
    <property type="entry name" value="GATASE_TYPE_1"/>
    <property type="match status" value="1"/>
</dbReference>
<feature type="chain" id="PRO_1000139353" description="CTP synthase">
    <location>
        <begin position="1"/>
        <end position="555"/>
    </location>
</feature>
<feature type="domain" description="Glutamine amidotransferase type-1" evidence="1">
    <location>
        <begin position="299"/>
        <end position="535"/>
    </location>
</feature>
<feature type="region of interest" description="Amidoligase domain" evidence="1">
    <location>
        <begin position="1"/>
        <end position="267"/>
    </location>
</feature>
<feature type="region of interest" description="Disordered" evidence="2">
    <location>
        <begin position="536"/>
        <end position="555"/>
    </location>
</feature>
<feature type="active site" description="Nucleophile; for glutamine hydrolysis" evidence="1">
    <location>
        <position position="381"/>
    </location>
</feature>
<feature type="active site" evidence="1">
    <location>
        <position position="508"/>
    </location>
</feature>
<feature type="active site" evidence="1">
    <location>
        <position position="510"/>
    </location>
</feature>
<feature type="binding site" evidence="1">
    <location>
        <position position="13"/>
    </location>
    <ligand>
        <name>CTP</name>
        <dbReference type="ChEBI" id="CHEBI:37563"/>
        <note>allosteric inhibitor</note>
    </ligand>
</feature>
<feature type="binding site" evidence="1">
    <location>
        <position position="13"/>
    </location>
    <ligand>
        <name>UTP</name>
        <dbReference type="ChEBI" id="CHEBI:46398"/>
    </ligand>
</feature>
<feature type="binding site" evidence="1">
    <location>
        <begin position="14"/>
        <end position="19"/>
    </location>
    <ligand>
        <name>ATP</name>
        <dbReference type="ChEBI" id="CHEBI:30616"/>
    </ligand>
</feature>
<feature type="binding site" evidence="1">
    <location>
        <position position="71"/>
    </location>
    <ligand>
        <name>ATP</name>
        <dbReference type="ChEBI" id="CHEBI:30616"/>
    </ligand>
</feature>
<feature type="binding site" evidence="1">
    <location>
        <position position="71"/>
    </location>
    <ligand>
        <name>Mg(2+)</name>
        <dbReference type="ChEBI" id="CHEBI:18420"/>
    </ligand>
</feature>
<feature type="binding site" evidence="1">
    <location>
        <position position="141"/>
    </location>
    <ligand>
        <name>Mg(2+)</name>
        <dbReference type="ChEBI" id="CHEBI:18420"/>
    </ligand>
</feature>
<feature type="binding site" evidence="1">
    <location>
        <begin position="148"/>
        <end position="150"/>
    </location>
    <ligand>
        <name>CTP</name>
        <dbReference type="ChEBI" id="CHEBI:37563"/>
        <note>allosteric inhibitor</note>
    </ligand>
</feature>
<feature type="binding site" evidence="1">
    <location>
        <begin position="188"/>
        <end position="193"/>
    </location>
    <ligand>
        <name>CTP</name>
        <dbReference type="ChEBI" id="CHEBI:37563"/>
        <note>allosteric inhibitor</note>
    </ligand>
</feature>
<feature type="binding site" evidence="1">
    <location>
        <begin position="188"/>
        <end position="193"/>
    </location>
    <ligand>
        <name>UTP</name>
        <dbReference type="ChEBI" id="CHEBI:46398"/>
    </ligand>
</feature>
<feature type="binding site" evidence="1">
    <location>
        <position position="224"/>
    </location>
    <ligand>
        <name>CTP</name>
        <dbReference type="ChEBI" id="CHEBI:37563"/>
        <note>allosteric inhibitor</note>
    </ligand>
</feature>
<feature type="binding site" evidence="1">
    <location>
        <position position="224"/>
    </location>
    <ligand>
        <name>UTP</name>
        <dbReference type="ChEBI" id="CHEBI:46398"/>
    </ligand>
</feature>
<feature type="binding site" evidence="1">
    <location>
        <position position="242"/>
    </location>
    <ligand>
        <name>ATP</name>
        <dbReference type="ChEBI" id="CHEBI:30616"/>
    </ligand>
</feature>
<feature type="binding site" evidence="1">
    <location>
        <position position="354"/>
    </location>
    <ligand>
        <name>L-glutamine</name>
        <dbReference type="ChEBI" id="CHEBI:58359"/>
    </ligand>
</feature>
<feature type="binding site" evidence="1">
    <location>
        <begin position="382"/>
        <end position="385"/>
    </location>
    <ligand>
        <name>L-glutamine</name>
        <dbReference type="ChEBI" id="CHEBI:58359"/>
    </ligand>
</feature>
<feature type="binding site" evidence="1">
    <location>
        <position position="405"/>
    </location>
    <ligand>
        <name>L-glutamine</name>
        <dbReference type="ChEBI" id="CHEBI:58359"/>
    </ligand>
</feature>
<feature type="binding site" evidence="1">
    <location>
        <position position="463"/>
    </location>
    <ligand>
        <name>L-glutamine</name>
        <dbReference type="ChEBI" id="CHEBI:58359"/>
    </ligand>
</feature>
<accession>B0CBC7</accession>
<gene>
    <name evidence="1" type="primary">pyrG</name>
    <name type="ordered locus">AM1_2914</name>
</gene>
<name>PYRG_ACAM1</name>
<sequence length="555" mass="61326">MTKFVFVTGGVVSSIGKGIVAASLGRLLKSRNYSVSILKLDPYINVDPGTMSPFQHGEVFVTDDGAETDLDLGHYERFTDTAMSRLNSVTTGSIYQSVLNKERRGDYEGGTVQVIPHITNEIKDRIKRVAKQATPDVLIIEIGGTVGDIESLPFLEAIRQFRKDVGRDNILYTHVTLMPWIPAAGEMKTKPTQHSVKELRSIGIQPDILVCRCDRPLSEGIKEKVSEFCDVPVEAVITSQDASSIYAVPLILEQEGLAQQVLKFMHLEQRRPDLTQWQALVHQLDHPSQTIEIALVGKYVQLSDAYLSVVESLQHAAVAQGIAVQIRWVNSEEIEAHGPDRYLADAAGIIVPGGFGIRGVDGKIAAIQYARDNQVPFLGLCLGMQCAVIEWARHIAGLEDANSAEFNPETRNPVINLLPEQQDVVDLGGTMRLGLYPCRLLPDTLASRLYPQETIVYERHRHRYEFNNAFRPLFLESGYVVSGTSPDGRLVEMIELPSHPFFIATQFHPEFRSRPNDPHPLFAGLVGACLADNGNNANHHDSTPAEPLVSEPLSS</sequence>
<keyword id="KW-0067">ATP-binding</keyword>
<keyword id="KW-0315">Glutamine amidotransferase</keyword>
<keyword id="KW-0436">Ligase</keyword>
<keyword id="KW-0460">Magnesium</keyword>
<keyword id="KW-0479">Metal-binding</keyword>
<keyword id="KW-0547">Nucleotide-binding</keyword>
<keyword id="KW-0665">Pyrimidine biosynthesis</keyword>
<keyword id="KW-1185">Reference proteome</keyword>
<reference key="1">
    <citation type="journal article" date="2008" name="Proc. Natl. Acad. Sci. U.S.A.">
        <title>Niche adaptation and genome expansion in the chlorophyll d-producing cyanobacterium Acaryochloris marina.</title>
        <authorList>
            <person name="Swingley W.D."/>
            <person name="Chen M."/>
            <person name="Cheung P.C."/>
            <person name="Conrad A.L."/>
            <person name="Dejesa L.C."/>
            <person name="Hao J."/>
            <person name="Honchak B.M."/>
            <person name="Karbach L.E."/>
            <person name="Kurdoglu A."/>
            <person name="Lahiri S."/>
            <person name="Mastrian S.D."/>
            <person name="Miyashita H."/>
            <person name="Page L."/>
            <person name="Ramakrishna P."/>
            <person name="Satoh S."/>
            <person name="Sattley W.M."/>
            <person name="Shimada Y."/>
            <person name="Taylor H.L."/>
            <person name="Tomo T."/>
            <person name="Tsuchiya T."/>
            <person name="Wang Z.T."/>
            <person name="Raymond J."/>
            <person name="Mimuro M."/>
            <person name="Blankenship R.E."/>
            <person name="Touchman J.W."/>
        </authorList>
    </citation>
    <scope>NUCLEOTIDE SEQUENCE [LARGE SCALE GENOMIC DNA]</scope>
    <source>
        <strain>MBIC 11017</strain>
    </source>
</reference>
<protein>
    <recommendedName>
        <fullName evidence="1">CTP synthase</fullName>
        <ecNumber evidence="1">6.3.4.2</ecNumber>
    </recommendedName>
    <alternativeName>
        <fullName evidence="1">Cytidine 5'-triphosphate synthase</fullName>
    </alternativeName>
    <alternativeName>
        <fullName evidence="1">Cytidine triphosphate synthetase</fullName>
        <shortName evidence="1">CTP synthetase</shortName>
        <shortName evidence="1">CTPS</shortName>
    </alternativeName>
    <alternativeName>
        <fullName evidence="1">UTP--ammonia ligase</fullName>
    </alternativeName>
</protein>